<accession>P61103</accession>
<name>TXH3_CYRSC</name>
<proteinExistence type="evidence at protein level"/>
<feature type="signal peptide" evidence="3">
    <location>
        <begin position="1"/>
        <end position="24"/>
    </location>
</feature>
<feature type="propeptide" id="PRO_0000035564" evidence="4">
    <location>
        <begin position="25"/>
        <end position="52"/>
    </location>
</feature>
<feature type="chain" id="PRO_0000035565" description="Mu-theraphotoxin-Hs1a" evidence="4">
    <location>
        <begin position="53"/>
        <end position="85"/>
    </location>
</feature>
<feature type="chain" id="PRO_0000035566" description="U2-theraphotoxin-Hs1b">
    <location>
        <begin position="53"/>
        <end position="84"/>
    </location>
</feature>
<feature type="disulfide bond" evidence="2">
    <location>
        <begin position="54"/>
        <end position="67"/>
    </location>
</feature>
<feature type="disulfide bond" evidence="2">
    <location>
        <begin position="61"/>
        <end position="72"/>
    </location>
</feature>
<feature type="disulfide bond" evidence="2">
    <location>
        <begin position="66"/>
        <end position="79"/>
    </location>
</feature>
<sequence length="87" mass="10155">MVNMKASMFLTFAGLVLLFVVCYASESEEKEFPKEMLSSIFAVDNDFKQEERDCAGYMRECKEKLCCSGYVCSSRWKWCVLPAPWRR</sequence>
<protein>
    <recommendedName>
        <fullName>Mu-theraphotoxin-Hs1a</fullName>
        <shortName>Mu-TRTX-Hs1a</shortName>
    </recommendedName>
    <alternativeName>
        <fullName>Huwentoxin-3</fullName>
    </alternativeName>
    <alternativeName>
        <fullName evidence="6">Huwentoxin-III</fullName>
        <shortName evidence="6">HwTx-III</shortName>
    </alternativeName>
    <component>
        <recommendedName>
            <fullName>U2-theraphotoxin-Hs1b</fullName>
            <shortName>U2-TRTX-Hs1b</shortName>
        </recommendedName>
        <alternativeName>
            <fullName>HWTX-IIIa</fullName>
        </alternativeName>
        <alternativeName>
            <fullName>Mutant of huwentoxin-3</fullName>
        </alternativeName>
        <alternativeName>
            <fullName>Mutant of huwentoxin-III</fullName>
            <shortName>mHWTX-III</shortName>
        </alternativeName>
    </component>
</protein>
<evidence type="ECO:0000250" key="1"/>
<evidence type="ECO:0000250" key="2">
    <source>
        <dbReference type="UniProtKB" id="B3FIS6"/>
    </source>
</evidence>
<evidence type="ECO:0000255" key="3"/>
<evidence type="ECO:0000269" key="4">
    <source>
    </source>
</evidence>
<evidence type="ECO:0000269" key="5">
    <source>
    </source>
</evidence>
<evidence type="ECO:0000303" key="6">
    <source>
    </source>
</evidence>
<evidence type="ECO:0000305" key="7"/>
<keyword id="KW-0165">Cleavage on pair of basic residues</keyword>
<keyword id="KW-0903">Direct protein sequencing</keyword>
<keyword id="KW-1015">Disulfide bond</keyword>
<keyword id="KW-0872">Ion channel impairing toxin</keyword>
<keyword id="KW-0960">Knottin</keyword>
<keyword id="KW-0528">Neurotoxin</keyword>
<keyword id="KW-0964">Secreted</keyword>
<keyword id="KW-0732">Signal</keyword>
<keyword id="KW-0800">Toxin</keyword>
<keyword id="KW-0738">Voltage-gated sodium channel impairing toxin</keyword>
<dbReference type="SMR" id="P61103"/>
<dbReference type="ArachnoServer" id="AS000331">
    <property type="toxin name" value="mu-theraphotoxin-Hs1a"/>
</dbReference>
<dbReference type="ArachnoServer" id="AS000754">
    <property type="toxin name" value="U2-theraphotoxin-Hs1b"/>
</dbReference>
<dbReference type="GO" id="GO:0005576">
    <property type="term" value="C:extracellular region"/>
    <property type="evidence" value="ECO:0007669"/>
    <property type="project" value="UniProtKB-SubCell"/>
</dbReference>
<dbReference type="GO" id="GO:0008200">
    <property type="term" value="F:ion channel inhibitor activity"/>
    <property type="evidence" value="ECO:0007669"/>
    <property type="project" value="InterPro"/>
</dbReference>
<dbReference type="GO" id="GO:0017080">
    <property type="term" value="F:sodium channel regulator activity"/>
    <property type="evidence" value="ECO:0007669"/>
    <property type="project" value="UniProtKB-KW"/>
</dbReference>
<dbReference type="GO" id="GO:0090729">
    <property type="term" value="F:toxin activity"/>
    <property type="evidence" value="ECO:0007669"/>
    <property type="project" value="UniProtKB-KW"/>
</dbReference>
<dbReference type="InterPro" id="IPR011696">
    <property type="entry name" value="Huwentoxin-1"/>
</dbReference>
<dbReference type="InterPro" id="IPR013140">
    <property type="entry name" value="Huwentoxin_CS1"/>
</dbReference>
<dbReference type="Pfam" id="PF07740">
    <property type="entry name" value="Toxin_12"/>
    <property type="match status" value="1"/>
</dbReference>
<dbReference type="SUPFAM" id="SSF57059">
    <property type="entry name" value="omega toxin-like"/>
    <property type="match status" value="1"/>
</dbReference>
<dbReference type="PROSITE" id="PS60021">
    <property type="entry name" value="HWTX_1"/>
    <property type="match status" value="1"/>
</dbReference>
<organism>
    <name type="scientific">Cyriopagopus schmidti</name>
    <name type="common">Chinese bird spider</name>
    <name type="synonym">Haplopelma schmidti</name>
    <dbReference type="NCBI Taxonomy" id="29017"/>
    <lineage>
        <taxon>Eukaryota</taxon>
        <taxon>Metazoa</taxon>
        <taxon>Ecdysozoa</taxon>
        <taxon>Arthropoda</taxon>
        <taxon>Chelicerata</taxon>
        <taxon>Arachnida</taxon>
        <taxon>Araneae</taxon>
        <taxon>Mygalomorphae</taxon>
        <taxon>Theraphosidae</taxon>
        <taxon>Cyriopagopus</taxon>
    </lineage>
</organism>
<comment type="function">
    <molecule>Mu-theraphotoxin-Hs1a</molecule>
    <text evidence="4 5">Probable sodium channel pore blocker that dose-dependently inhibits voltage-gated sodium channels (VGSC) on DUM neurons in a way similar to tetrodotoxin (PubMed:20506577). Has no effect on the kinetics of activation and inactivation (PubMed:20506577). Seems not to interact with VGSC in an inactivated state (PubMed:20506577). In vivo, reversibly paralyzes cockroaches, and can enhance the muscular contraction elicited by stimulating its nerve (PubMed:14614533).</text>
</comment>
<comment type="subcellular location">
    <subcellularLocation>
        <location evidence="4">Secreted</location>
    </subcellularLocation>
</comment>
<comment type="tissue specificity">
    <text evidence="7">Expressed by the venom gland.</text>
</comment>
<comment type="domain">
    <text evidence="1">The presence of a 'disulfide through disulfide knot' structurally defines this protein as a knottin.</text>
</comment>
<comment type="mass spectrometry" mass="3853.35" method="MALDI" evidence="4">
    <molecule>Mu-theraphotoxin-Hs1a</molecule>
</comment>
<comment type="mass spectrometry" mass="3667.4" method="MALDI" evidence="4">
    <molecule>U2-theraphotoxin-Hs1b</molecule>
</comment>
<comment type="disruption phenotype">
    <text evidence="4">The natural mutant mHwTx-III does not reversibly paralyze cockroaches.</text>
</comment>
<comment type="toxic dose">
    <text evidence="4">PD(50) of HwTx-III is 192.95 +/- 120.84 mg/kg to locusts.</text>
</comment>
<comment type="miscellaneous">
    <text evidence="4 5">Negative results: does not inhibit sodium channels of adult rat DRG neurons (PubMed:20506577). Neither HwTx-III, nor mHwTx-III agglutinate erythrocytes (PubMed:14614533).</text>
</comment>
<comment type="similarity">
    <text evidence="7">Belongs to the neurotoxin 10 (Hwtx-1) family. 51 (Hntx-8) subfamily. Hntx-8 sub-subfamily.</text>
</comment>
<reference key="1">
    <citation type="journal article" date="2003" name="Toxicon">
        <title>cDNA sequence analysis of seven peptide toxins from the spider Selenocosmia huwena.</title>
        <authorList>
            <person name="Diao J."/>
            <person name="Lin Y."/>
            <person name="Tang J."/>
            <person name="Liang S.-P."/>
        </authorList>
    </citation>
    <scope>NUCLEOTIDE SEQUENCE [MRNA]</scope>
    <source>
        <tissue>Venom gland</tissue>
    </source>
</reference>
<reference key="2">
    <citation type="journal article" date="2003" name="Sheng Wu Hua Xue Yu Sheng Wu Wu Li Xue Bao">
        <title>Purification and characterization of a neurotoxic peptide huwentoxin-III and a natural inactive mutant from the venom of the spider Selenocosmia huwena Wang (Ornithoctonus huwena Wang).</title>
        <authorList>
            <person name="Huang R.-H."/>
            <person name="Liu Z.-H."/>
            <person name="Liang S.-P."/>
        </authorList>
    </citation>
    <scope>PROTEIN SEQUENCE OF 53-85</scope>
    <scope>FUNCTION</scope>
    <scope>DISULFIDE BONDS</scope>
    <scope>TOXIC DOSE</scope>
    <scope>MASS SPECTROMETRY</scope>
    <scope>DISRUPTION PHENOTYPE</scope>
    <scope>SUBCELLULAR LOCATION</scope>
    <source>
        <tissue>Venom</tissue>
    </source>
</reference>
<reference key="3">
    <citation type="journal article" date="2010" name="J. Zhejiang Univ. Sci. B">
        <title>Mechanism of action of two insect toxins huwentoxin-III and hainantoxin-VI on voltage-gated sodium channels.</title>
        <authorList>
            <person name="Wang R.L."/>
            <person name="Yi S."/>
            <person name="Liang S.P."/>
        </authorList>
    </citation>
    <scope>FUNCTION</scope>
</reference>